<dbReference type="EMBL" id="AF354914">
    <property type="protein sequence ID" value="AAQ15156.1"/>
    <property type="molecule type" value="mRNA"/>
</dbReference>
<dbReference type="SMR" id="Q71RR1"/>
<dbReference type="GO" id="GO:0005576">
    <property type="term" value="C:extracellular region"/>
    <property type="evidence" value="ECO:0007669"/>
    <property type="project" value="UniProtKB-SubCell"/>
</dbReference>
<dbReference type="GO" id="GO:0046872">
    <property type="term" value="F:metal ion binding"/>
    <property type="evidence" value="ECO:0007669"/>
    <property type="project" value="UniProtKB-KW"/>
</dbReference>
<dbReference type="GO" id="GO:0090729">
    <property type="term" value="F:toxin activity"/>
    <property type="evidence" value="ECO:0007669"/>
    <property type="project" value="UniProtKB-KW"/>
</dbReference>
<dbReference type="FunFam" id="3.10.100.10:FF:000087">
    <property type="entry name" value="Snaclec rhodocetin subunit delta"/>
    <property type="match status" value="1"/>
</dbReference>
<dbReference type="Gene3D" id="3.10.100.10">
    <property type="entry name" value="Mannose-Binding Protein A, subunit A"/>
    <property type="match status" value="1"/>
</dbReference>
<dbReference type="InterPro" id="IPR001304">
    <property type="entry name" value="C-type_lectin-like"/>
</dbReference>
<dbReference type="InterPro" id="IPR016186">
    <property type="entry name" value="C-type_lectin-like/link_sf"/>
</dbReference>
<dbReference type="InterPro" id="IPR050111">
    <property type="entry name" value="C-type_lectin/snaclec_domain"/>
</dbReference>
<dbReference type="InterPro" id="IPR018378">
    <property type="entry name" value="C-type_lectin_CS"/>
</dbReference>
<dbReference type="InterPro" id="IPR016187">
    <property type="entry name" value="CTDL_fold"/>
</dbReference>
<dbReference type="PANTHER" id="PTHR22803">
    <property type="entry name" value="MANNOSE, PHOSPHOLIPASE, LECTIN RECEPTOR RELATED"/>
    <property type="match status" value="1"/>
</dbReference>
<dbReference type="Pfam" id="PF00059">
    <property type="entry name" value="Lectin_C"/>
    <property type="match status" value="1"/>
</dbReference>
<dbReference type="PRINTS" id="PR01504">
    <property type="entry name" value="PNCREATITSAP"/>
</dbReference>
<dbReference type="SMART" id="SM00034">
    <property type="entry name" value="CLECT"/>
    <property type="match status" value="1"/>
</dbReference>
<dbReference type="SUPFAM" id="SSF56436">
    <property type="entry name" value="C-type lectin-like"/>
    <property type="match status" value="1"/>
</dbReference>
<dbReference type="PROSITE" id="PS00615">
    <property type="entry name" value="C_TYPE_LECTIN_1"/>
    <property type="match status" value="1"/>
</dbReference>
<dbReference type="PROSITE" id="PS50041">
    <property type="entry name" value="C_TYPE_LECTIN_2"/>
    <property type="match status" value="1"/>
</dbReference>
<reference key="1">
    <citation type="submission" date="2001-03" db="EMBL/GenBank/DDBJ databases">
        <title>Cloning and characterization of C-type lectins from Trimeresurus stejnegeri venom.</title>
        <authorList>
            <person name="Lee W.-H."/>
            <person name="Liu H."/>
            <person name="Zhang Y."/>
        </authorList>
    </citation>
    <scope>NUCLEOTIDE SEQUENCE [MRNA]</scope>
    <source>
        <tissue>Venom gland</tissue>
    </source>
</reference>
<organism>
    <name type="scientific">Trimeresurus stejnegeri</name>
    <name type="common">Chinese green tree viper</name>
    <name type="synonym">Viridovipera stejnegeri</name>
    <dbReference type="NCBI Taxonomy" id="39682"/>
    <lineage>
        <taxon>Eukaryota</taxon>
        <taxon>Metazoa</taxon>
        <taxon>Chordata</taxon>
        <taxon>Craniata</taxon>
        <taxon>Vertebrata</taxon>
        <taxon>Euteleostomi</taxon>
        <taxon>Lepidosauria</taxon>
        <taxon>Squamata</taxon>
        <taxon>Bifurcata</taxon>
        <taxon>Unidentata</taxon>
        <taxon>Episquamata</taxon>
        <taxon>Toxicofera</taxon>
        <taxon>Serpentes</taxon>
        <taxon>Colubroidea</taxon>
        <taxon>Viperidae</taxon>
        <taxon>Crotalinae</taxon>
        <taxon>Trimeresurus</taxon>
    </lineage>
</organism>
<name>SL9B2_TRIST</name>
<accession>Q71RR1</accession>
<comment type="function">
    <text evidence="1">Anticoagulant protein which binds to the gamma-carboxyglutamic acid-domain regions of factors IX (F9) and factor X (F10) in the presence of calcium with a 1 to 1 stoichiometry.</text>
</comment>
<comment type="subunit">
    <text evidence="1">Heterodimer of subunits A and B2; disulfide-linked.</text>
</comment>
<comment type="subcellular location">
    <subcellularLocation>
        <location evidence="1">Secreted</location>
    </subcellularLocation>
</comment>
<comment type="tissue specificity">
    <text>Expressed by the venom gland.</text>
</comment>
<comment type="miscellaneous">
    <text evidence="1">Calcium is required for ligand binding.</text>
</comment>
<comment type="similarity">
    <text evidence="3">Belongs to the snaclec family.</text>
</comment>
<sequence length="146" mass="16854">MGRLIFVSFGLLVVFLSLSGTAADCLSGWSSYEGHCYKPFNELKNWADAENFCTQQHAGGHLVSFQSSEEADFVVKLAFETFGHSIFWMGLSNVWNQCNWQWSNAAMLRYKAWAEESYCVYFKSTNNKWRSRSCRMMANFVCEFQV</sequence>
<evidence type="ECO:0000250" key="1"/>
<evidence type="ECO:0000255" key="2">
    <source>
        <dbReference type="PROSITE-ProRule" id="PRU00040"/>
    </source>
</evidence>
<evidence type="ECO:0000305" key="3"/>
<protein>
    <recommendedName>
        <fullName>Snaclec coagulation factor IX/factor X-binding protein subunit B2</fullName>
        <shortName>IX/X-bp subunit B2</shortName>
    </recommendedName>
</protein>
<keyword id="KW-1203">Blood coagulation cascade inhibiting toxin</keyword>
<keyword id="KW-0106">Calcium</keyword>
<keyword id="KW-1015">Disulfide bond</keyword>
<keyword id="KW-1199">Hemostasis impairing toxin</keyword>
<keyword id="KW-0479">Metal-binding</keyword>
<keyword id="KW-0964">Secreted</keyword>
<keyword id="KW-0732">Signal</keyword>
<keyword id="KW-0800">Toxin</keyword>
<feature type="signal peptide" evidence="1">
    <location>
        <begin position="1"/>
        <end position="23"/>
    </location>
</feature>
<feature type="chain" id="PRO_0000356315" description="Snaclec coagulation factor IX/factor X-binding protein subunit B2">
    <location>
        <begin position="24"/>
        <end position="146"/>
    </location>
</feature>
<feature type="domain" description="C-type lectin" evidence="2">
    <location>
        <begin position="32"/>
        <end position="143"/>
    </location>
</feature>
<feature type="disulfide bond" evidence="2">
    <location>
        <begin position="25"/>
        <end position="36"/>
    </location>
</feature>
<feature type="disulfide bond" evidence="2">
    <location>
        <begin position="53"/>
        <end position="142"/>
    </location>
</feature>
<feature type="disulfide bond" description="Interchain (with C-102 in subunit A)" evidence="2">
    <location>
        <position position="98"/>
    </location>
</feature>
<feature type="disulfide bond" evidence="2">
    <location>
        <begin position="119"/>
        <end position="134"/>
    </location>
</feature>
<proteinExistence type="evidence at transcript level"/>